<evidence type="ECO:0000255" key="1">
    <source>
        <dbReference type="HAMAP-Rule" id="MF_00732"/>
    </source>
</evidence>
<comment type="function">
    <text evidence="1">Central regulator of manganese homeostasis.</text>
</comment>
<comment type="activity regulation">
    <text evidence="1">DNA binding is strongly activated by Mn(2+).</text>
</comment>
<comment type="subunit">
    <text evidence="1">Homodimer.</text>
</comment>
<comment type="subcellular location">
    <subcellularLocation>
        <location evidence="1">Cytoplasm</location>
    </subcellularLocation>
</comment>
<comment type="similarity">
    <text evidence="1">Belongs to the DtxR/MntR family.</text>
</comment>
<name>MNTR_GEOTN</name>
<gene>
    <name evidence="1" type="primary">mntR</name>
    <name type="ordered locus">GTNG_2347</name>
</gene>
<dbReference type="EMBL" id="CP000557">
    <property type="protein sequence ID" value="ABO67694.1"/>
    <property type="molecule type" value="Genomic_DNA"/>
</dbReference>
<dbReference type="RefSeq" id="WP_008879826.1">
    <property type="nucleotide sequence ID" value="NC_009328.1"/>
</dbReference>
<dbReference type="SMR" id="A4IQU0"/>
<dbReference type="GeneID" id="87623557"/>
<dbReference type="KEGG" id="gtn:GTNG_2347"/>
<dbReference type="eggNOG" id="COG1321">
    <property type="taxonomic scope" value="Bacteria"/>
</dbReference>
<dbReference type="HOGENOM" id="CLU_069532_3_0_9"/>
<dbReference type="Proteomes" id="UP000001578">
    <property type="component" value="Chromosome"/>
</dbReference>
<dbReference type="GO" id="GO:0005737">
    <property type="term" value="C:cytoplasm"/>
    <property type="evidence" value="ECO:0007669"/>
    <property type="project" value="UniProtKB-SubCell"/>
</dbReference>
<dbReference type="GO" id="GO:0003677">
    <property type="term" value="F:DNA binding"/>
    <property type="evidence" value="ECO:0007669"/>
    <property type="project" value="UniProtKB-KW"/>
</dbReference>
<dbReference type="GO" id="GO:0003700">
    <property type="term" value="F:DNA-binding transcription factor activity"/>
    <property type="evidence" value="ECO:0007669"/>
    <property type="project" value="UniProtKB-UniRule"/>
</dbReference>
<dbReference type="GO" id="GO:0030145">
    <property type="term" value="F:manganese ion binding"/>
    <property type="evidence" value="ECO:0007669"/>
    <property type="project" value="UniProtKB-UniRule"/>
</dbReference>
<dbReference type="GO" id="GO:0046983">
    <property type="term" value="F:protein dimerization activity"/>
    <property type="evidence" value="ECO:0007669"/>
    <property type="project" value="InterPro"/>
</dbReference>
<dbReference type="GO" id="GO:0030026">
    <property type="term" value="P:intracellular manganese ion homeostasis"/>
    <property type="evidence" value="ECO:0007669"/>
    <property type="project" value="UniProtKB-UniRule"/>
</dbReference>
<dbReference type="FunFam" id="1.10.10.10:FF:000189">
    <property type="entry name" value="HTH-type transcriptional regulator MntR"/>
    <property type="match status" value="1"/>
</dbReference>
<dbReference type="Gene3D" id="1.10.60.10">
    <property type="entry name" value="Iron dependent repressor, metal binding and dimerisation domain"/>
    <property type="match status" value="1"/>
</dbReference>
<dbReference type="Gene3D" id="1.10.10.10">
    <property type="entry name" value="Winged helix-like DNA-binding domain superfamily/Winged helix DNA-binding domain"/>
    <property type="match status" value="1"/>
</dbReference>
<dbReference type="HAMAP" id="MF_00732">
    <property type="entry name" value="HTH_MntR"/>
    <property type="match status" value="1"/>
</dbReference>
<dbReference type="InterPro" id="IPR050536">
    <property type="entry name" value="DtxR_MntR_Metal-Reg"/>
</dbReference>
<dbReference type="InterPro" id="IPR001367">
    <property type="entry name" value="Fe_dep_repressor"/>
</dbReference>
<dbReference type="InterPro" id="IPR036421">
    <property type="entry name" value="Fe_dep_repressor_sf"/>
</dbReference>
<dbReference type="InterPro" id="IPR022687">
    <property type="entry name" value="HTH_DTXR"/>
</dbReference>
<dbReference type="InterPro" id="IPR022897">
    <property type="entry name" value="HTH_tscrpt_reg_MntR"/>
</dbReference>
<dbReference type="InterPro" id="IPR022689">
    <property type="entry name" value="Iron_dep_repressor"/>
</dbReference>
<dbReference type="InterPro" id="IPR036388">
    <property type="entry name" value="WH-like_DNA-bd_sf"/>
</dbReference>
<dbReference type="InterPro" id="IPR036390">
    <property type="entry name" value="WH_DNA-bd_sf"/>
</dbReference>
<dbReference type="NCBIfam" id="NF003025">
    <property type="entry name" value="PRK03902.1"/>
    <property type="match status" value="1"/>
</dbReference>
<dbReference type="PANTHER" id="PTHR33238">
    <property type="entry name" value="IRON (METAL) DEPENDENT REPRESSOR, DTXR FAMILY"/>
    <property type="match status" value="1"/>
</dbReference>
<dbReference type="PANTHER" id="PTHR33238:SF11">
    <property type="entry name" value="TRANSCRIPTIONAL REGULATOR MNTR"/>
    <property type="match status" value="1"/>
</dbReference>
<dbReference type="Pfam" id="PF02742">
    <property type="entry name" value="Fe_dep_repr_C"/>
    <property type="match status" value="1"/>
</dbReference>
<dbReference type="Pfam" id="PF01325">
    <property type="entry name" value="Fe_dep_repress"/>
    <property type="match status" value="1"/>
</dbReference>
<dbReference type="SMART" id="SM00529">
    <property type="entry name" value="HTH_DTXR"/>
    <property type="match status" value="1"/>
</dbReference>
<dbReference type="SUPFAM" id="SSF47979">
    <property type="entry name" value="Iron-dependent repressor protein, dimerization domain"/>
    <property type="match status" value="1"/>
</dbReference>
<dbReference type="SUPFAM" id="SSF46785">
    <property type="entry name" value="Winged helix' DNA-binding domain"/>
    <property type="match status" value="1"/>
</dbReference>
<dbReference type="PROSITE" id="PS50944">
    <property type="entry name" value="HTH_DTXR"/>
    <property type="match status" value="1"/>
</dbReference>
<feature type="chain" id="PRO_1000062114" description="HTH-type transcriptional regulator MntR">
    <location>
        <begin position="1"/>
        <end position="141"/>
    </location>
</feature>
<feature type="domain" description="HTH dtxR-type" evidence="1">
    <location>
        <begin position="1"/>
        <end position="63"/>
    </location>
</feature>
<feature type="binding site" evidence="1">
    <location>
        <position position="8"/>
    </location>
    <ligand>
        <name>Mn(2+)</name>
        <dbReference type="ChEBI" id="CHEBI:29035"/>
        <label>1</label>
    </ligand>
</feature>
<feature type="binding site" evidence="1">
    <location>
        <position position="11"/>
    </location>
    <ligand>
        <name>Mn(2+)</name>
        <dbReference type="ChEBI" id="CHEBI:29035"/>
        <label>2</label>
    </ligand>
</feature>
<feature type="binding site" evidence="1">
    <location>
        <position position="77"/>
    </location>
    <ligand>
        <name>Mn(2+)</name>
        <dbReference type="ChEBI" id="CHEBI:29035"/>
        <label>2</label>
    </ligand>
</feature>
<feature type="binding site" evidence="1">
    <location>
        <position position="99"/>
    </location>
    <ligand>
        <name>Mn(2+)</name>
        <dbReference type="ChEBI" id="CHEBI:29035"/>
        <label>1</label>
    </ligand>
</feature>
<feature type="binding site" evidence="1">
    <location>
        <position position="99"/>
    </location>
    <ligand>
        <name>Mn(2+)</name>
        <dbReference type="ChEBI" id="CHEBI:29035"/>
        <label>2</label>
    </ligand>
</feature>
<feature type="binding site" evidence="1">
    <location>
        <position position="102"/>
    </location>
    <ligand>
        <name>Mn(2+)</name>
        <dbReference type="ChEBI" id="CHEBI:29035"/>
        <label>1</label>
    </ligand>
</feature>
<feature type="binding site" evidence="1">
    <location>
        <position position="102"/>
    </location>
    <ligand>
        <name>Mn(2+)</name>
        <dbReference type="ChEBI" id="CHEBI:29035"/>
        <label>2</label>
    </ligand>
</feature>
<feature type="binding site" evidence="1">
    <location>
        <position position="103"/>
    </location>
    <ligand>
        <name>Mn(2+)</name>
        <dbReference type="ChEBI" id="CHEBI:29035"/>
        <label>1</label>
    </ligand>
</feature>
<reference key="1">
    <citation type="journal article" date="2007" name="Proc. Natl. Acad. Sci. U.S.A.">
        <title>Genome and proteome of long-chain alkane degrading Geobacillus thermodenitrificans NG80-2 isolated from a deep-subsurface oil reservoir.</title>
        <authorList>
            <person name="Feng L."/>
            <person name="Wang W."/>
            <person name="Cheng J."/>
            <person name="Ren Y."/>
            <person name="Zhao G."/>
            <person name="Gao C."/>
            <person name="Tang Y."/>
            <person name="Liu X."/>
            <person name="Han W."/>
            <person name="Peng X."/>
            <person name="Liu R."/>
            <person name="Wang L."/>
        </authorList>
    </citation>
    <scope>NUCLEOTIDE SEQUENCE [LARGE SCALE GENOMIC DNA]</scope>
    <source>
        <strain>NG80-2</strain>
    </source>
</reference>
<accession>A4IQU0</accession>
<protein>
    <recommendedName>
        <fullName evidence="1">HTH-type transcriptional regulator MntR</fullName>
    </recommendedName>
    <alternativeName>
        <fullName evidence="1">Manganese transport regulator</fullName>
    </alternativeName>
</protein>
<keyword id="KW-0010">Activator</keyword>
<keyword id="KW-0963">Cytoplasm</keyword>
<keyword id="KW-0238">DNA-binding</keyword>
<keyword id="KW-0464">Manganese</keyword>
<keyword id="KW-0479">Metal-binding</keyword>
<keyword id="KW-0678">Repressor</keyword>
<keyword id="KW-0804">Transcription</keyword>
<keyword id="KW-0805">Transcription regulation</keyword>
<organism>
    <name type="scientific">Geobacillus thermodenitrificans (strain NG80-2)</name>
    <dbReference type="NCBI Taxonomy" id="420246"/>
    <lineage>
        <taxon>Bacteria</taxon>
        <taxon>Bacillati</taxon>
        <taxon>Bacillota</taxon>
        <taxon>Bacilli</taxon>
        <taxon>Bacillales</taxon>
        <taxon>Anoxybacillaceae</taxon>
        <taxon>Geobacillus</taxon>
    </lineage>
</organism>
<sequence>MPTPSMEDYIEQIYILIEEKGYARVSDIAEALSVHPSSVTKMVQKLDKDEYLVYEKYRGLVLTPKGKKIGQRLVYRHELLEQFLRLIGVNEENIYHDVEGIEHHLSWNAIDRIGDLVQYFQEDERRIEALRNIQKRNEQGE</sequence>
<proteinExistence type="inferred from homology"/>